<organism>
    <name type="scientific">Agrobacterium fabrum (strain C58 / ATCC 33970)</name>
    <name type="common">Agrobacterium tumefaciens (strain C58)</name>
    <dbReference type="NCBI Taxonomy" id="176299"/>
    <lineage>
        <taxon>Bacteria</taxon>
        <taxon>Pseudomonadati</taxon>
        <taxon>Pseudomonadota</taxon>
        <taxon>Alphaproteobacteria</taxon>
        <taxon>Hyphomicrobiales</taxon>
        <taxon>Rhizobiaceae</taxon>
        <taxon>Rhizobium/Agrobacterium group</taxon>
        <taxon>Agrobacterium</taxon>
        <taxon>Agrobacterium tumefaciens complex</taxon>
    </lineage>
</organism>
<name>FABZ_AGRFC</name>
<reference key="1">
    <citation type="journal article" date="2001" name="Science">
        <title>The genome of the natural genetic engineer Agrobacterium tumefaciens C58.</title>
        <authorList>
            <person name="Wood D.W."/>
            <person name="Setubal J.C."/>
            <person name="Kaul R."/>
            <person name="Monks D.E."/>
            <person name="Kitajima J.P."/>
            <person name="Okura V.K."/>
            <person name="Zhou Y."/>
            <person name="Chen L."/>
            <person name="Wood G.E."/>
            <person name="Almeida N.F. Jr."/>
            <person name="Woo L."/>
            <person name="Chen Y."/>
            <person name="Paulsen I.T."/>
            <person name="Eisen J.A."/>
            <person name="Karp P.D."/>
            <person name="Bovee D. Sr."/>
            <person name="Chapman P."/>
            <person name="Clendenning J."/>
            <person name="Deatherage G."/>
            <person name="Gillet W."/>
            <person name="Grant C."/>
            <person name="Kutyavin T."/>
            <person name="Levy R."/>
            <person name="Li M.-J."/>
            <person name="McClelland E."/>
            <person name="Palmieri A."/>
            <person name="Raymond C."/>
            <person name="Rouse G."/>
            <person name="Saenphimmachak C."/>
            <person name="Wu Z."/>
            <person name="Romero P."/>
            <person name="Gordon D."/>
            <person name="Zhang S."/>
            <person name="Yoo H."/>
            <person name="Tao Y."/>
            <person name="Biddle P."/>
            <person name="Jung M."/>
            <person name="Krespan W."/>
            <person name="Perry M."/>
            <person name="Gordon-Kamm B."/>
            <person name="Liao L."/>
            <person name="Kim S."/>
            <person name="Hendrick C."/>
            <person name="Zhao Z.-Y."/>
            <person name="Dolan M."/>
            <person name="Chumley F."/>
            <person name="Tingey S.V."/>
            <person name="Tomb J.-F."/>
            <person name="Gordon M.P."/>
            <person name="Olson M.V."/>
            <person name="Nester E.W."/>
        </authorList>
    </citation>
    <scope>NUCLEOTIDE SEQUENCE [LARGE SCALE GENOMIC DNA]</scope>
    <source>
        <strain>C58 / ATCC 33970</strain>
    </source>
</reference>
<reference key="2">
    <citation type="journal article" date="2001" name="Science">
        <title>Genome sequence of the plant pathogen and biotechnology agent Agrobacterium tumefaciens C58.</title>
        <authorList>
            <person name="Goodner B."/>
            <person name="Hinkle G."/>
            <person name="Gattung S."/>
            <person name="Miller N."/>
            <person name="Blanchard M."/>
            <person name="Qurollo B."/>
            <person name="Goldman B.S."/>
            <person name="Cao Y."/>
            <person name="Askenazi M."/>
            <person name="Halling C."/>
            <person name="Mullin L."/>
            <person name="Houmiel K."/>
            <person name="Gordon J."/>
            <person name="Vaudin M."/>
            <person name="Iartchouk O."/>
            <person name="Epp A."/>
            <person name="Liu F."/>
            <person name="Wollam C."/>
            <person name="Allinger M."/>
            <person name="Doughty D."/>
            <person name="Scott C."/>
            <person name="Lappas C."/>
            <person name="Markelz B."/>
            <person name="Flanagan C."/>
            <person name="Crowell C."/>
            <person name="Gurson J."/>
            <person name="Lomo C."/>
            <person name="Sear C."/>
            <person name="Strub G."/>
            <person name="Cielo C."/>
            <person name="Slater S."/>
        </authorList>
    </citation>
    <scope>NUCLEOTIDE SEQUENCE [LARGE SCALE GENOMIC DNA]</scope>
    <source>
        <strain>C58 / ATCC 33970</strain>
    </source>
</reference>
<proteinExistence type="inferred from homology"/>
<keyword id="KW-0963">Cytoplasm</keyword>
<keyword id="KW-0441">Lipid A biosynthesis</keyword>
<keyword id="KW-0444">Lipid biosynthesis</keyword>
<keyword id="KW-0443">Lipid metabolism</keyword>
<keyword id="KW-0456">Lyase</keyword>
<keyword id="KW-1185">Reference proteome</keyword>
<sequence>MADETKATLGTADILEVMKLLPHRYPFLLIDKIIEIDGDSSAIGIKNVTVNEPHFTGHFPDRPIMPGVLIVEAMAQTAGAICARNQGEGGHLVYFMTIDNARFRRPVVPGDRLEIHVVKQRQRGNVFKFHCEAKVEGALVAEADVGAMMIPEGQ</sequence>
<accession>Q8UFL4</accession>
<evidence type="ECO:0000250" key="1"/>
<evidence type="ECO:0000305" key="2"/>
<dbReference type="EC" id="4.2.1.59"/>
<dbReference type="EMBL" id="AE007869">
    <property type="protein sequence ID" value="AAK87175.2"/>
    <property type="molecule type" value="Genomic_DNA"/>
</dbReference>
<dbReference type="PIR" id="AG2746">
    <property type="entry name" value="AG2746"/>
</dbReference>
<dbReference type="PIR" id="F97527">
    <property type="entry name" value="F97527"/>
</dbReference>
<dbReference type="RefSeq" id="NP_354390.2">
    <property type="nucleotide sequence ID" value="NC_003062.2"/>
</dbReference>
<dbReference type="RefSeq" id="WP_006312533.1">
    <property type="nucleotide sequence ID" value="NC_003062.2"/>
</dbReference>
<dbReference type="SMR" id="Q8UFL4"/>
<dbReference type="STRING" id="176299.Atu1383"/>
<dbReference type="EnsemblBacteria" id="AAK87175">
    <property type="protein sequence ID" value="AAK87175"/>
    <property type="gene ID" value="Atu1383"/>
</dbReference>
<dbReference type="GeneID" id="1133421"/>
<dbReference type="KEGG" id="atu:Atu1383"/>
<dbReference type="PATRIC" id="fig|176299.10.peg.1406"/>
<dbReference type="eggNOG" id="COG0764">
    <property type="taxonomic scope" value="Bacteria"/>
</dbReference>
<dbReference type="HOGENOM" id="CLU_078912_1_2_5"/>
<dbReference type="OrthoDB" id="9772788at2"/>
<dbReference type="PhylomeDB" id="Q8UFL4"/>
<dbReference type="BioCyc" id="AGRO:ATU1383-MONOMER"/>
<dbReference type="Proteomes" id="UP000000813">
    <property type="component" value="Chromosome circular"/>
</dbReference>
<dbReference type="GO" id="GO:0005737">
    <property type="term" value="C:cytoplasm"/>
    <property type="evidence" value="ECO:0007669"/>
    <property type="project" value="UniProtKB-SubCell"/>
</dbReference>
<dbReference type="GO" id="GO:0016020">
    <property type="term" value="C:membrane"/>
    <property type="evidence" value="ECO:0007669"/>
    <property type="project" value="GOC"/>
</dbReference>
<dbReference type="GO" id="GO:0019171">
    <property type="term" value="F:(3R)-hydroxyacyl-[acyl-carrier-protein] dehydratase activity"/>
    <property type="evidence" value="ECO:0007669"/>
    <property type="project" value="UniProtKB-EC"/>
</dbReference>
<dbReference type="GO" id="GO:0006633">
    <property type="term" value="P:fatty acid biosynthetic process"/>
    <property type="evidence" value="ECO:0007669"/>
    <property type="project" value="UniProtKB-UniRule"/>
</dbReference>
<dbReference type="GO" id="GO:0009245">
    <property type="term" value="P:lipid A biosynthetic process"/>
    <property type="evidence" value="ECO:0007669"/>
    <property type="project" value="UniProtKB-UniRule"/>
</dbReference>
<dbReference type="CDD" id="cd01288">
    <property type="entry name" value="FabZ"/>
    <property type="match status" value="1"/>
</dbReference>
<dbReference type="FunFam" id="3.10.129.10:FF:000001">
    <property type="entry name" value="3-hydroxyacyl-[acyl-carrier-protein] dehydratase FabZ"/>
    <property type="match status" value="1"/>
</dbReference>
<dbReference type="Gene3D" id="3.10.129.10">
    <property type="entry name" value="Hotdog Thioesterase"/>
    <property type="match status" value="1"/>
</dbReference>
<dbReference type="HAMAP" id="MF_00406">
    <property type="entry name" value="FabZ"/>
    <property type="match status" value="1"/>
</dbReference>
<dbReference type="InterPro" id="IPR013114">
    <property type="entry name" value="FabA_FabZ"/>
</dbReference>
<dbReference type="InterPro" id="IPR010084">
    <property type="entry name" value="FabZ"/>
</dbReference>
<dbReference type="InterPro" id="IPR029069">
    <property type="entry name" value="HotDog_dom_sf"/>
</dbReference>
<dbReference type="NCBIfam" id="TIGR01750">
    <property type="entry name" value="fabZ"/>
    <property type="match status" value="1"/>
</dbReference>
<dbReference type="NCBIfam" id="NF000582">
    <property type="entry name" value="PRK00006.1"/>
    <property type="match status" value="1"/>
</dbReference>
<dbReference type="PANTHER" id="PTHR30272">
    <property type="entry name" value="3-HYDROXYACYL-[ACYL-CARRIER-PROTEIN] DEHYDRATASE"/>
    <property type="match status" value="1"/>
</dbReference>
<dbReference type="PANTHER" id="PTHR30272:SF1">
    <property type="entry name" value="3-HYDROXYACYL-[ACYL-CARRIER-PROTEIN] DEHYDRATASE"/>
    <property type="match status" value="1"/>
</dbReference>
<dbReference type="Pfam" id="PF07977">
    <property type="entry name" value="FabA"/>
    <property type="match status" value="1"/>
</dbReference>
<dbReference type="SUPFAM" id="SSF54637">
    <property type="entry name" value="Thioesterase/thiol ester dehydrase-isomerase"/>
    <property type="match status" value="1"/>
</dbReference>
<protein>
    <recommendedName>
        <fullName>3-hydroxyacyl-[acyl-carrier-protein] dehydratase FabZ</fullName>
        <ecNumber>4.2.1.59</ecNumber>
    </recommendedName>
    <alternativeName>
        <fullName>(3R)-hydroxymyristoyl-[acyl-carrier-protein] dehydratase</fullName>
        <shortName>(3R)-hydroxymyristoyl-ACP dehydrase</shortName>
    </alternativeName>
    <alternativeName>
        <fullName>Beta-hydroxyacyl-ACP dehydratase</fullName>
    </alternativeName>
</protein>
<feature type="chain" id="PRO_0000091629" description="3-hydroxyacyl-[acyl-carrier-protein] dehydratase FabZ">
    <location>
        <begin position="1"/>
        <end position="154"/>
    </location>
</feature>
<feature type="active site" evidence="1">
    <location>
        <position position="58"/>
    </location>
</feature>
<gene>
    <name type="primary">fabZ</name>
    <name type="ordered locus">Atu1383</name>
    <name type="ORF">AGR_C_2558</name>
</gene>
<comment type="function">
    <text evidence="1">Involved in unsaturated fatty acids biosynthesis. Catalyzes the dehydration of short chain beta-hydroxyacyl-ACPs and long chain saturated and unsaturated beta-hydroxyacyl-ACPs (By similarity).</text>
</comment>
<comment type="catalytic activity">
    <reaction>
        <text>a (3R)-hydroxyacyl-[ACP] = a (2E)-enoyl-[ACP] + H2O</text>
        <dbReference type="Rhea" id="RHEA:13097"/>
        <dbReference type="Rhea" id="RHEA-COMP:9925"/>
        <dbReference type="Rhea" id="RHEA-COMP:9945"/>
        <dbReference type="ChEBI" id="CHEBI:15377"/>
        <dbReference type="ChEBI" id="CHEBI:78784"/>
        <dbReference type="ChEBI" id="CHEBI:78827"/>
        <dbReference type="EC" id="4.2.1.59"/>
    </reaction>
</comment>
<comment type="subcellular location">
    <subcellularLocation>
        <location evidence="1">Cytoplasm</location>
    </subcellularLocation>
</comment>
<comment type="similarity">
    <text evidence="2">Belongs to the thioester dehydratase family. FabZ subfamily.</text>
</comment>